<organism>
    <name type="scientific">Acidothermus cellulolyticus (strain ATCC 43068 / DSM 8971 / 11B)</name>
    <dbReference type="NCBI Taxonomy" id="351607"/>
    <lineage>
        <taxon>Bacteria</taxon>
        <taxon>Bacillati</taxon>
        <taxon>Actinomycetota</taxon>
        <taxon>Actinomycetes</taxon>
        <taxon>Acidothermales</taxon>
        <taxon>Acidothermaceae</taxon>
        <taxon>Acidothermus</taxon>
    </lineage>
</organism>
<accession>A0LUZ6</accession>
<name>MIAA_ACIC1</name>
<reference key="1">
    <citation type="journal article" date="2009" name="Genome Res.">
        <title>Complete genome of the cellulolytic thermophile Acidothermus cellulolyticus 11B provides insights into its ecophysiological and evolutionary adaptations.</title>
        <authorList>
            <person name="Barabote R.D."/>
            <person name="Xie G."/>
            <person name="Leu D.H."/>
            <person name="Normand P."/>
            <person name="Necsulea A."/>
            <person name="Daubin V."/>
            <person name="Medigue C."/>
            <person name="Adney W.S."/>
            <person name="Xu X.C."/>
            <person name="Lapidus A."/>
            <person name="Parales R.E."/>
            <person name="Detter C."/>
            <person name="Pujic P."/>
            <person name="Bruce D."/>
            <person name="Lavire C."/>
            <person name="Challacombe J.F."/>
            <person name="Brettin T.S."/>
            <person name="Berry A.M."/>
        </authorList>
    </citation>
    <scope>NUCLEOTIDE SEQUENCE [LARGE SCALE GENOMIC DNA]</scope>
    <source>
        <strain>ATCC 43068 / DSM 8971 / 11B</strain>
    </source>
</reference>
<keyword id="KW-0067">ATP-binding</keyword>
<keyword id="KW-0460">Magnesium</keyword>
<keyword id="KW-0547">Nucleotide-binding</keyword>
<keyword id="KW-1185">Reference proteome</keyword>
<keyword id="KW-0808">Transferase</keyword>
<keyword id="KW-0819">tRNA processing</keyword>
<comment type="function">
    <text evidence="1">Catalyzes the transfer of a dimethylallyl group onto the adenine at position 37 in tRNAs that read codons beginning with uridine, leading to the formation of N6-(dimethylallyl)adenosine (i(6)A).</text>
</comment>
<comment type="catalytic activity">
    <reaction evidence="1">
        <text>adenosine(37) in tRNA + dimethylallyl diphosphate = N(6)-dimethylallyladenosine(37) in tRNA + diphosphate</text>
        <dbReference type="Rhea" id="RHEA:26482"/>
        <dbReference type="Rhea" id="RHEA-COMP:10162"/>
        <dbReference type="Rhea" id="RHEA-COMP:10375"/>
        <dbReference type="ChEBI" id="CHEBI:33019"/>
        <dbReference type="ChEBI" id="CHEBI:57623"/>
        <dbReference type="ChEBI" id="CHEBI:74411"/>
        <dbReference type="ChEBI" id="CHEBI:74415"/>
        <dbReference type="EC" id="2.5.1.75"/>
    </reaction>
</comment>
<comment type="cofactor">
    <cofactor evidence="1">
        <name>Mg(2+)</name>
        <dbReference type="ChEBI" id="CHEBI:18420"/>
    </cofactor>
</comment>
<comment type="subunit">
    <text evidence="1">Monomer.</text>
</comment>
<comment type="similarity">
    <text evidence="1">Belongs to the IPP transferase family.</text>
</comment>
<feature type="chain" id="PRO_0000377046" description="tRNA dimethylallyltransferase">
    <location>
        <begin position="1"/>
        <end position="318"/>
    </location>
</feature>
<feature type="region of interest" description="Interaction with substrate tRNA" evidence="1">
    <location>
        <begin position="46"/>
        <end position="49"/>
    </location>
</feature>
<feature type="binding site" evidence="1">
    <location>
        <begin position="21"/>
        <end position="28"/>
    </location>
    <ligand>
        <name>ATP</name>
        <dbReference type="ChEBI" id="CHEBI:30616"/>
    </ligand>
</feature>
<feature type="binding site" evidence="1">
    <location>
        <begin position="23"/>
        <end position="28"/>
    </location>
    <ligand>
        <name>substrate</name>
    </ligand>
</feature>
<feature type="site" description="Interaction with substrate tRNA" evidence="1">
    <location>
        <position position="112"/>
    </location>
</feature>
<feature type="site" description="Interaction with substrate tRNA" evidence="1">
    <location>
        <position position="133"/>
    </location>
</feature>
<evidence type="ECO:0000255" key="1">
    <source>
        <dbReference type="HAMAP-Rule" id="MF_00185"/>
    </source>
</evidence>
<gene>
    <name evidence="1" type="primary">miaA</name>
    <name type="ordered locus">Acel_1484</name>
</gene>
<protein>
    <recommendedName>
        <fullName evidence="1">tRNA dimethylallyltransferase</fullName>
        <ecNumber evidence="1">2.5.1.75</ecNumber>
    </recommendedName>
    <alternativeName>
        <fullName evidence="1">Dimethylallyl diphosphate:tRNA dimethylallyltransferase</fullName>
        <shortName evidence="1">DMAPP:tRNA dimethylallyltransferase</shortName>
        <shortName evidence="1">DMATase</shortName>
    </alternativeName>
    <alternativeName>
        <fullName evidence="1">Isopentenyl-diphosphate:tRNA isopentenyltransferase</fullName>
        <shortName evidence="1">IPP transferase</shortName>
        <shortName evidence="1">IPPT</shortName>
        <shortName evidence="1">IPTase</shortName>
    </alternativeName>
</protein>
<proteinExistence type="inferred from homology"/>
<sequence>MSSSASLSSSASLQRVVVLVGPTATGKSVLAVRLAQRFNAEVVNADSMQVYRGMDIGTAKLPPAERDGVAHHVLDVWPVTKTASVAEYQHLARAAIEEIGRRGRLPILVGGSGLYVRAAVDRLEFPGTDPAIRARLEAELAAHGPEALHARLARLDPQAAERILPTNGRRIVRALEVLQLGRPRFAAELPEYASVYDALFLGLDLATPELDDRVERRVAAMWQAGFVDEVRHLAEDCGLREGRTASRALGYRQVLTMLDGGCDEAEARRRTVDATKRFVRRQRSWFRPDPRIHWLDAADAALETAAARTIEGWMTSRS</sequence>
<dbReference type="EC" id="2.5.1.75" evidence="1"/>
<dbReference type="EMBL" id="CP000481">
    <property type="protein sequence ID" value="ABK53256.1"/>
    <property type="molecule type" value="Genomic_DNA"/>
</dbReference>
<dbReference type="RefSeq" id="WP_011720319.1">
    <property type="nucleotide sequence ID" value="NC_008578.1"/>
</dbReference>
<dbReference type="SMR" id="A0LUZ6"/>
<dbReference type="FunCoup" id="A0LUZ6">
    <property type="interactions" value="311"/>
</dbReference>
<dbReference type="STRING" id="351607.Acel_1484"/>
<dbReference type="KEGG" id="ace:Acel_1484"/>
<dbReference type="eggNOG" id="COG0324">
    <property type="taxonomic scope" value="Bacteria"/>
</dbReference>
<dbReference type="HOGENOM" id="CLU_032616_0_1_11"/>
<dbReference type="InParanoid" id="A0LUZ6"/>
<dbReference type="Proteomes" id="UP000008221">
    <property type="component" value="Chromosome"/>
</dbReference>
<dbReference type="GO" id="GO:0005524">
    <property type="term" value="F:ATP binding"/>
    <property type="evidence" value="ECO:0007669"/>
    <property type="project" value="UniProtKB-UniRule"/>
</dbReference>
<dbReference type="GO" id="GO:0052381">
    <property type="term" value="F:tRNA dimethylallyltransferase activity"/>
    <property type="evidence" value="ECO:0007669"/>
    <property type="project" value="UniProtKB-UniRule"/>
</dbReference>
<dbReference type="GO" id="GO:0006400">
    <property type="term" value="P:tRNA modification"/>
    <property type="evidence" value="ECO:0007669"/>
    <property type="project" value="TreeGrafter"/>
</dbReference>
<dbReference type="FunFam" id="1.10.20.140:FF:000001">
    <property type="entry name" value="tRNA dimethylallyltransferase"/>
    <property type="match status" value="1"/>
</dbReference>
<dbReference type="Gene3D" id="1.10.20.140">
    <property type="match status" value="1"/>
</dbReference>
<dbReference type="Gene3D" id="3.40.50.300">
    <property type="entry name" value="P-loop containing nucleotide triphosphate hydrolases"/>
    <property type="match status" value="1"/>
</dbReference>
<dbReference type="HAMAP" id="MF_00185">
    <property type="entry name" value="IPP_trans"/>
    <property type="match status" value="1"/>
</dbReference>
<dbReference type="InterPro" id="IPR039657">
    <property type="entry name" value="Dimethylallyltransferase"/>
</dbReference>
<dbReference type="InterPro" id="IPR018022">
    <property type="entry name" value="IPT"/>
</dbReference>
<dbReference type="InterPro" id="IPR027417">
    <property type="entry name" value="P-loop_NTPase"/>
</dbReference>
<dbReference type="NCBIfam" id="TIGR00174">
    <property type="entry name" value="miaA"/>
    <property type="match status" value="1"/>
</dbReference>
<dbReference type="PANTHER" id="PTHR11088">
    <property type="entry name" value="TRNA DIMETHYLALLYLTRANSFERASE"/>
    <property type="match status" value="1"/>
</dbReference>
<dbReference type="PANTHER" id="PTHR11088:SF60">
    <property type="entry name" value="TRNA DIMETHYLALLYLTRANSFERASE"/>
    <property type="match status" value="1"/>
</dbReference>
<dbReference type="Pfam" id="PF01715">
    <property type="entry name" value="IPPT"/>
    <property type="match status" value="1"/>
</dbReference>
<dbReference type="SUPFAM" id="SSF52540">
    <property type="entry name" value="P-loop containing nucleoside triphosphate hydrolases"/>
    <property type="match status" value="2"/>
</dbReference>